<sequence length="296" mass="34566">MKKALGILAILLILVGGYFAYDKYMDNKAKEQVEYFLDKTLRKSGKGSYKYVDYKPIGGEIIIKDVYYRDRNGEEFKIEEIIIEKLSETEGKFLFKNVKPLKVKGKGLLEEYGYKDPKFNLFVSYEAKPKEKEFHLRSLSLDYPEAFEVNISFILGNYDHAFWKTVALSDRPPEEVSFQVLSELGSIKINSLEVVYRDKGFKERVIKKEAQKRGKTPEEFKKELIRKIEEEKLKARSEFERNLLDAFEKFLEKGKEIKVVIKPNPPLKIQDLFVVAAVQKDERELLKLLNPVIEVK</sequence>
<name>Y1923_AQUAE</name>
<protein>
    <recommendedName>
        <fullName>Uncharacterized protein aq_1923</fullName>
    </recommendedName>
</protein>
<evidence type="ECO:0000255" key="1"/>
<proteinExistence type="inferred from homology"/>
<reference key="1">
    <citation type="journal article" date="1998" name="Nature">
        <title>The complete genome of the hyperthermophilic bacterium Aquifex aeolicus.</title>
        <authorList>
            <person name="Deckert G."/>
            <person name="Warren P.V."/>
            <person name="Gaasterland T."/>
            <person name="Young W.G."/>
            <person name="Lenox A.L."/>
            <person name="Graham D.E."/>
            <person name="Overbeek R."/>
            <person name="Snead M.A."/>
            <person name="Keller M."/>
            <person name="Aujay M."/>
            <person name="Huber R."/>
            <person name="Feldman R.A."/>
            <person name="Short J.M."/>
            <person name="Olsen G.J."/>
            <person name="Swanson R.V."/>
        </authorList>
    </citation>
    <scope>NUCLEOTIDE SEQUENCE [LARGE SCALE GENOMIC DNA]</scope>
    <source>
        <strain>VF5</strain>
    </source>
</reference>
<gene>
    <name type="ordered locus">aq_1923</name>
</gene>
<accession>O67752</accession>
<keyword id="KW-1185">Reference proteome</keyword>
<keyword id="KW-0732">Signal</keyword>
<feature type="signal peptide" evidence="1">
    <location>
        <begin position="1"/>
        <end position="20"/>
    </location>
</feature>
<feature type="chain" id="PRO_0000013628" description="Uncharacterized protein aq_1923">
    <location>
        <begin position="21"/>
        <end position="296"/>
    </location>
</feature>
<dbReference type="EMBL" id="AE000657">
    <property type="protein sequence ID" value="AAC07719.1"/>
    <property type="molecule type" value="Genomic_DNA"/>
</dbReference>
<dbReference type="PIR" id="D70465">
    <property type="entry name" value="D70465"/>
</dbReference>
<dbReference type="RefSeq" id="NP_214320.1">
    <property type="nucleotide sequence ID" value="NC_000918.1"/>
</dbReference>
<dbReference type="RefSeq" id="WP_010881256.1">
    <property type="nucleotide sequence ID" value="NC_000918.1"/>
</dbReference>
<dbReference type="EnsemblBacteria" id="AAC07719">
    <property type="protein sequence ID" value="AAC07719"/>
    <property type="gene ID" value="aq_1923"/>
</dbReference>
<dbReference type="KEGG" id="aae:aq_1923"/>
<dbReference type="eggNOG" id="ENOG50317TW">
    <property type="taxonomic scope" value="Bacteria"/>
</dbReference>
<dbReference type="HOGENOM" id="CLU_938909_0_0_0"/>
<dbReference type="InParanoid" id="O67752"/>
<dbReference type="OrthoDB" id="10001729at2"/>
<dbReference type="Proteomes" id="UP000000798">
    <property type="component" value="Chromosome"/>
</dbReference>
<organism>
    <name type="scientific">Aquifex aeolicus (strain VF5)</name>
    <dbReference type="NCBI Taxonomy" id="224324"/>
    <lineage>
        <taxon>Bacteria</taxon>
        <taxon>Pseudomonadati</taxon>
        <taxon>Aquificota</taxon>
        <taxon>Aquificia</taxon>
        <taxon>Aquificales</taxon>
        <taxon>Aquificaceae</taxon>
        <taxon>Aquifex</taxon>
    </lineage>
</organism>